<comment type="catalytic activity">
    <reaction evidence="1">
        <text>tRNA(Phe) + L-phenylalanine + ATP = L-phenylalanyl-tRNA(Phe) + AMP + diphosphate + H(+)</text>
        <dbReference type="Rhea" id="RHEA:19413"/>
        <dbReference type="Rhea" id="RHEA-COMP:9668"/>
        <dbReference type="Rhea" id="RHEA-COMP:9699"/>
        <dbReference type="ChEBI" id="CHEBI:15378"/>
        <dbReference type="ChEBI" id="CHEBI:30616"/>
        <dbReference type="ChEBI" id="CHEBI:33019"/>
        <dbReference type="ChEBI" id="CHEBI:58095"/>
        <dbReference type="ChEBI" id="CHEBI:78442"/>
        <dbReference type="ChEBI" id="CHEBI:78531"/>
        <dbReference type="ChEBI" id="CHEBI:456215"/>
        <dbReference type="EC" id="6.1.1.20"/>
    </reaction>
</comment>
<comment type="cofactor">
    <cofactor evidence="1">
        <name>Mg(2+)</name>
        <dbReference type="ChEBI" id="CHEBI:18420"/>
    </cofactor>
    <text evidence="1">Binds 2 magnesium ions per tetramer.</text>
</comment>
<comment type="subunit">
    <text evidence="1">Tetramer of two alpha and two beta subunits.</text>
</comment>
<comment type="subcellular location">
    <subcellularLocation>
        <location evidence="1">Cytoplasm</location>
    </subcellularLocation>
</comment>
<comment type="similarity">
    <text evidence="1">Belongs to the class-II aminoacyl-tRNA synthetase family. Phe-tRNA synthetase alpha subunit type 1 subfamily.</text>
</comment>
<organism>
    <name type="scientific">Escherichia coli O81 (strain ED1a)</name>
    <dbReference type="NCBI Taxonomy" id="585397"/>
    <lineage>
        <taxon>Bacteria</taxon>
        <taxon>Pseudomonadati</taxon>
        <taxon>Pseudomonadota</taxon>
        <taxon>Gammaproteobacteria</taxon>
        <taxon>Enterobacterales</taxon>
        <taxon>Enterobacteriaceae</taxon>
        <taxon>Escherichia</taxon>
    </lineage>
</organism>
<dbReference type="EC" id="6.1.1.20" evidence="1"/>
<dbReference type="EMBL" id="CU928162">
    <property type="protein sequence ID" value="CAR08109.2"/>
    <property type="molecule type" value="Genomic_DNA"/>
</dbReference>
<dbReference type="RefSeq" id="WP_000018588.1">
    <property type="nucleotide sequence ID" value="NC_011745.1"/>
</dbReference>
<dbReference type="SMR" id="B7MVJ3"/>
<dbReference type="GeneID" id="86946239"/>
<dbReference type="KEGG" id="ecq:ECED1_1916"/>
<dbReference type="HOGENOM" id="CLU_025086_0_1_6"/>
<dbReference type="Proteomes" id="UP000000748">
    <property type="component" value="Chromosome"/>
</dbReference>
<dbReference type="GO" id="GO:0005737">
    <property type="term" value="C:cytoplasm"/>
    <property type="evidence" value="ECO:0007669"/>
    <property type="project" value="UniProtKB-SubCell"/>
</dbReference>
<dbReference type="GO" id="GO:0005524">
    <property type="term" value="F:ATP binding"/>
    <property type="evidence" value="ECO:0007669"/>
    <property type="project" value="UniProtKB-UniRule"/>
</dbReference>
<dbReference type="GO" id="GO:0000287">
    <property type="term" value="F:magnesium ion binding"/>
    <property type="evidence" value="ECO:0007669"/>
    <property type="project" value="UniProtKB-UniRule"/>
</dbReference>
<dbReference type="GO" id="GO:0004826">
    <property type="term" value="F:phenylalanine-tRNA ligase activity"/>
    <property type="evidence" value="ECO:0007669"/>
    <property type="project" value="UniProtKB-UniRule"/>
</dbReference>
<dbReference type="GO" id="GO:0000049">
    <property type="term" value="F:tRNA binding"/>
    <property type="evidence" value="ECO:0007669"/>
    <property type="project" value="InterPro"/>
</dbReference>
<dbReference type="GO" id="GO:0006432">
    <property type="term" value="P:phenylalanyl-tRNA aminoacylation"/>
    <property type="evidence" value="ECO:0007669"/>
    <property type="project" value="UniProtKB-UniRule"/>
</dbReference>
<dbReference type="CDD" id="cd00496">
    <property type="entry name" value="PheRS_alpha_core"/>
    <property type="match status" value="1"/>
</dbReference>
<dbReference type="FunFam" id="3.30.930.10:FF:000003">
    <property type="entry name" value="Phenylalanine--tRNA ligase alpha subunit"/>
    <property type="match status" value="1"/>
</dbReference>
<dbReference type="Gene3D" id="3.30.930.10">
    <property type="entry name" value="Bira Bifunctional Protein, Domain 2"/>
    <property type="match status" value="1"/>
</dbReference>
<dbReference type="HAMAP" id="MF_00281">
    <property type="entry name" value="Phe_tRNA_synth_alpha1"/>
    <property type="match status" value="1"/>
</dbReference>
<dbReference type="InterPro" id="IPR006195">
    <property type="entry name" value="aa-tRNA-synth_II"/>
</dbReference>
<dbReference type="InterPro" id="IPR045864">
    <property type="entry name" value="aa-tRNA-synth_II/BPL/LPL"/>
</dbReference>
<dbReference type="InterPro" id="IPR004529">
    <property type="entry name" value="Phe-tRNA-synth_IIc_asu"/>
</dbReference>
<dbReference type="InterPro" id="IPR004188">
    <property type="entry name" value="Phe-tRNA_ligase_II_N"/>
</dbReference>
<dbReference type="InterPro" id="IPR022911">
    <property type="entry name" value="Phe_tRNA_ligase_alpha1_bac"/>
</dbReference>
<dbReference type="InterPro" id="IPR002319">
    <property type="entry name" value="Phenylalanyl-tRNA_Synthase"/>
</dbReference>
<dbReference type="InterPro" id="IPR010978">
    <property type="entry name" value="tRNA-bd_arm"/>
</dbReference>
<dbReference type="NCBIfam" id="TIGR00468">
    <property type="entry name" value="pheS"/>
    <property type="match status" value="1"/>
</dbReference>
<dbReference type="PANTHER" id="PTHR11538:SF41">
    <property type="entry name" value="PHENYLALANINE--TRNA LIGASE, MITOCHONDRIAL"/>
    <property type="match status" value="1"/>
</dbReference>
<dbReference type="PANTHER" id="PTHR11538">
    <property type="entry name" value="PHENYLALANYL-TRNA SYNTHETASE"/>
    <property type="match status" value="1"/>
</dbReference>
<dbReference type="Pfam" id="PF02912">
    <property type="entry name" value="Phe_tRNA-synt_N"/>
    <property type="match status" value="1"/>
</dbReference>
<dbReference type="Pfam" id="PF01409">
    <property type="entry name" value="tRNA-synt_2d"/>
    <property type="match status" value="1"/>
</dbReference>
<dbReference type="SUPFAM" id="SSF55681">
    <property type="entry name" value="Class II aaRS and biotin synthetases"/>
    <property type="match status" value="1"/>
</dbReference>
<dbReference type="SUPFAM" id="SSF46589">
    <property type="entry name" value="tRNA-binding arm"/>
    <property type="match status" value="1"/>
</dbReference>
<dbReference type="PROSITE" id="PS50862">
    <property type="entry name" value="AA_TRNA_LIGASE_II"/>
    <property type="match status" value="1"/>
</dbReference>
<feature type="chain" id="PRO_1000199310" description="Phenylalanine--tRNA ligase alpha subunit">
    <location>
        <begin position="1"/>
        <end position="327"/>
    </location>
</feature>
<feature type="binding site" evidence="1">
    <location>
        <position position="252"/>
    </location>
    <ligand>
        <name>Mg(2+)</name>
        <dbReference type="ChEBI" id="CHEBI:18420"/>
        <note>shared with beta subunit</note>
    </ligand>
</feature>
<accession>B7MVJ3</accession>
<proteinExistence type="inferred from homology"/>
<reference key="1">
    <citation type="journal article" date="2009" name="PLoS Genet.">
        <title>Organised genome dynamics in the Escherichia coli species results in highly diverse adaptive paths.</title>
        <authorList>
            <person name="Touchon M."/>
            <person name="Hoede C."/>
            <person name="Tenaillon O."/>
            <person name="Barbe V."/>
            <person name="Baeriswyl S."/>
            <person name="Bidet P."/>
            <person name="Bingen E."/>
            <person name="Bonacorsi S."/>
            <person name="Bouchier C."/>
            <person name="Bouvet O."/>
            <person name="Calteau A."/>
            <person name="Chiapello H."/>
            <person name="Clermont O."/>
            <person name="Cruveiller S."/>
            <person name="Danchin A."/>
            <person name="Diard M."/>
            <person name="Dossat C."/>
            <person name="Karoui M.E."/>
            <person name="Frapy E."/>
            <person name="Garry L."/>
            <person name="Ghigo J.M."/>
            <person name="Gilles A.M."/>
            <person name="Johnson J."/>
            <person name="Le Bouguenec C."/>
            <person name="Lescat M."/>
            <person name="Mangenot S."/>
            <person name="Martinez-Jehanne V."/>
            <person name="Matic I."/>
            <person name="Nassif X."/>
            <person name="Oztas S."/>
            <person name="Petit M.A."/>
            <person name="Pichon C."/>
            <person name="Rouy Z."/>
            <person name="Ruf C.S."/>
            <person name="Schneider D."/>
            <person name="Tourret J."/>
            <person name="Vacherie B."/>
            <person name="Vallenet D."/>
            <person name="Medigue C."/>
            <person name="Rocha E.P.C."/>
            <person name="Denamur E."/>
        </authorList>
    </citation>
    <scope>NUCLEOTIDE SEQUENCE [LARGE SCALE GENOMIC DNA]</scope>
    <source>
        <strain>ED1a</strain>
    </source>
</reference>
<protein>
    <recommendedName>
        <fullName evidence="1">Phenylalanine--tRNA ligase alpha subunit</fullName>
        <ecNumber evidence="1">6.1.1.20</ecNumber>
    </recommendedName>
    <alternativeName>
        <fullName evidence="1">Phenylalanyl-tRNA synthetase alpha subunit</fullName>
        <shortName evidence="1">PheRS</shortName>
    </alternativeName>
</protein>
<gene>
    <name evidence="1" type="primary">pheS</name>
    <name type="ordered locus">ECED1_1916</name>
</gene>
<evidence type="ECO:0000255" key="1">
    <source>
        <dbReference type="HAMAP-Rule" id="MF_00281"/>
    </source>
</evidence>
<sequence>MSHLAELVASAKAAISQASDVAALDNVRVEYLGKKGHLTLQMTTLRELPPEERPAAGAVINEAKEQVQQALNARKAELESAALNARLAAETIDVSLPGRRIENGGLHPVTRTIDRIESFFGELGFTVATGPEIEDDYHNFDALNIPGHHPARADHDTFWFDATRLLRTQTSGVQIRTMKAQQPPIRIIAPGRVYRNDYDQTHTPMFHQMEGLIVDTNISFTNLKGTLHDFLRNFFEEDLQIRFRPSYFPFTEPSAEVDVMGKNGKWLEVLGCGMVHPNVLRNVGIDPEVYSGFAFGMGMERLTMLRYGVTDLRSFFENDLRFLKQFK</sequence>
<keyword id="KW-0030">Aminoacyl-tRNA synthetase</keyword>
<keyword id="KW-0067">ATP-binding</keyword>
<keyword id="KW-0963">Cytoplasm</keyword>
<keyword id="KW-0436">Ligase</keyword>
<keyword id="KW-0460">Magnesium</keyword>
<keyword id="KW-0479">Metal-binding</keyword>
<keyword id="KW-0547">Nucleotide-binding</keyword>
<keyword id="KW-0648">Protein biosynthesis</keyword>
<name>SYFA_ECO81</name>